<proteinExistence type="inferred from homology"/>
<gene>
    <name evidence="1" type="primary">rpmG</name>
    <name type="ordered locus">RALTA_A2510</name>
</gene>
<name>RL33_CUPTR</name>
<comment type="similarity">
    <text evidence="1">Belongs to the bacterial ribosomal protein bL33 family.</text>
</comment>
<accession>B3R6D7</accession>
<evidence type="ECO:0000255" key="1">
    <source>
        <dbReference type="HAMAP-Rule" id="MF_00294"/>
    </source>
</evidence>
<evidence type="ECO:0000256" key="2">
    <source>
        <dbReference type="SAM" id="MobiDB-lite"/>
    </source>
</evidence>
<evidence type="ECO:0000305" key="3"/>
<reference key="1">
    <citation type="journal article" date="2008" name="Genome Res.">
        <title>Genome sequence of the beta-rhizobium Cupriavidus taiwanensis and comparative genomics of rhizobia.</title>
        <authorList>
            <person name="Amadou C."/>
            <person name="Pascal G."/>
            <person name="Mangenot S."/>
            <person name="Glew M."/>
            <person name="Bontemps C."/>
            <person name="Capela D."/>
            <person name="Carrere S."/>
            <person name="Cruveiller S."/>
            <person name="Dossat C."/>
            <person name="Lajus A."/>
            <person name="Marchetti M."/>
            <person name="Poinsot V."/>
            <person name="Rouy Z."/>
            <person name="Servin B."/>
            <person name="Saad M."/>
            <person name="Schenowitz C."/>
            <person name="Barbe V."/>
            <person name="Batut J."/>
            <person name="Medigue C."/>
            <person name="Masson-Boivin C."/>
        </authorList>
    </citation>
    <scope>NUCLEOTIDE SEQUENCE [LARGE SCALE GENOMIC DNA]</scope>
    <source>
        <strain>DSM 17343 / BCRC 17206 / CCUG 44338 / CIP 107171 / LMG 19424 / R1</strain>
    </source>
</reference>
<protein>
    <recommendedName>
        <fullName evidence="1">Large ribosomal subunit protein bL33</fullName>
    </recommendedName>
    <alternativeName>
        <fullName evidence="3">50S ribosomal protein L33</fullName>
    </alternativeName>
</protein>
<dbReference type="EMBL" id="CU633749">
    <property type="protein sequence ID" value="CAQ70441.1"/>
    <property type="molecule type" value="Genomic_DNA"/>
</dbReference>
<dbReference type="RefSeq" id="WP_010814980.1">
    <property type="nucleotide sequence ID" value="NC_010528.1"/>
</dbReference>
<dbReference type="SMR" id="B3R6D7"/>
<dbReference type="GeneID" id="98341866"/>
<dbReference type="KEGG" id="cti:RALTA_A2510"/>
<dbReference type="eggNOG" id="COG0267">
    <property type="taxonomic scope" value="Bacteria"/>
</dbReference>
<dbReference type="HOGENOM" id="CLU_190949_1_1_4"/>
<dbReference type="BioCyc" id="CTAI977880:RALTA_RS12200-MONOMER"/>
<dbReference type="Proteomes" id="UP000001692">
    <property type="component" value="Chromosome 1"/>
</dbReference>
<dbReference type="GO" id="GO:0022625">
    <property type="term" value="C:cytosolic large ribosomal subunit"/>
    <property type="evidence" value="ECO:0007669"/>
    <property type="project" value="TreeGrafter"/>
</dbReference>
<dbReference type="GO" id="GO:0003735">
    <property type="term" value="F:structural constituent of ribosome"/>
    <property type="evidence" value="ECO:0007669"/>
    <property type="project" value="InterPro"/>
</dbReference>
<dbReference type="GO" id="GO:0006412">
    <property type="term" value="P:translation"/>
    <property type="evidence" value="ECO:0007669"/>
    <property type="project" value="UniProtKB-UniRule"/>
</dbReference>
<dbReference type="FunFam" id="2.20.28.120:FF:000001">
    <property type="entry name" value="50S ribosomal protein L33"/>
    <property type="match status" value="1"/>
</dbReference>
<dbReference type="Gene3D" id="2.20.28.120">
    <property type="entry name" value="Ribosomal protein L33"/>
    <property type="match status" value="1"/>
</dbReference>
<dbReference type="HAMAP" id="MF_00294">
    <property type="entry name" value="Ribosomal_bL33"/>
    <property type="match status" value="1"/>
</dbReference>
<dbReference type="InterPro" id="IPR001705">
    <property type="entry name" value="Ribosomal_bL33"/>
</dbReference>
<dbReference type="InterPro" id="IPR018264">
    <property type="entry name" value="Ribosomal_bL33_CS"/>
</dbReference>
<dbReference type="InterPro" id="IPR038584">
    <property type="entry name" value="Ribosomal_bL33_sf"/>
</dbReference>
<dbReference type="InterPro" id="IPR011332">
    <property type="entry name" value="Ribosomal_zn-bd"/>
</dbReference>
<dbReference type="NCBIfam" id="NF001860">
    <property type="entry name" value="PRK00595.1"/>
    <property type="match status" value="1"/>
</dbReference>
<dbReference type="NCBIfam" id="TIGR01023">
    <property type="entry name" value="rpmG_bact"/>
    <property type="match status" value="1"/>
</dbReference>
<dbReference type="PANTHER" id="PTHR15238">
    <property type="entry name" value="54S RIBOSOMAL PROTEIN L39, MITOCHONDRIAL"/>
    <property type="match status" value="1"/>
</dbReference>
<dbReference type="PANTHER" id="PTHR15238:SF1">
    <property type="entry name" value="LARGE RIBOSOMAL SUBUNIT PROTEIN BL33M"/>
    <property type="match status" value="1"/>
</dbReference>
<dbReference type="Pfam" id="PF00471">
    <property type="entry name" value="Ribosomal_L33"/>
    <property type="match status" value="1"/>
</dbReference>
<dbReference type="SUPFAM" id="SSF57829">
    <property type="entry name" value="Zn-binding ribosomal proteins"/>
    <property type="match status" value="1"/>
</dbReference>
<dbReference type="PROSITE" id="PS00582">
    <property type="entry name" value="RIBOSOMAL_L33"/>
    <property type="match status" value="1"/>
</dbReference>
<organism>
    <name type="scientific">Cupriavidus taiwanensis (strain DSM 17343 / BCRC 17206 / CCUG 44338 / CIP 107171 / LMG 19424 / R1)</name>
    <name type="common">Ralstonia taiwanensis (strain LMG 19424)</name>
    <dbReference type="NCBI Taxonomy" id="977880"/>
    <lineage>
        <taxon>Bacteria</taxon>
        <taxon>Pseudomonadati</taxon>
        <taxon>Pseudomonadota</taxon>
        <taxon>Betaproteobacteria</taxon>
        <taxon>Burkholderiales</taxon>
        <taxon>Burkholderiaceae</taxon>
        <taxon>Cupriavidus</taxon>
    </lineage>
</organism>
<feature type="chain" id="PRO_1000115126" description="Large ribosomal subunit protein bL33">
    <location>
        <begin position="1"/>
        <end position="56"/>
    </location>
</feature>
<feature type="region of interest" description="Disordered" evidence="2">
    <location>
        <begin position="1"/>
        <end position="28"/>
    </location>
</feature>
<feature type="compositionally biased region" description="Basic and acidic residues" evidence="2">
    <location>
        <begin position="1"/>
        <end position="12"/>
    </location>
</feature>
<feature type="compositionally biased region" description="Polar residues" evidence="2">
    <location>
        <begin position="15"/>
        <end position="25"/>
    </location>
</feature>
<sequence length="56" mass="6417">MASKGGRDKIKLESTAGTGHFYTTTKNKRTMPEKMEIMKFDPVARKHVAYKETKIK</sequence>
<keyword id="KW-0687">Ribonucleoprotein</keyword>
<keyword id="KW-0689">Ribosomal protein</keyword>